<sequence length="128" mass="15152">MKLRITLALTSVLAFCVFGDKENENLMENLLEDDLLDIFTDAIHMERQETNQECIAKWKSCAGRKLDCCEGLECWKRRWGHEVCVPITQKIFCLEKWKSCFERKYDCCEELECWERRGNKHPVCAPKQ</sequence>
<proteinExistence type="evidence at protein level"/>
<organism>
    <name type="scientific">Hadronyche infensa</name>
    <name type="common">Fraser island funnel-web spider</name>
    <name type="synonym">Atrax infensus</name>
    <dbReference type="NCBI Taxonomy" id="153481"/>
    <lineage>
        <taxon>Eukaryota</taxon>
        <taxon>Metazoa</taxon>
        <taxon>Ecdysozoa</taxon>
        <taxon>Arthropoda</taxon>
        <taxon>Chelicerata</taxon>
        <taxon>Arachnida</taxon>
        <taxon>Araneae</taxon>
        <taxon>Mygalomorphae</taxon>
        <taxon>Hexathelidae</taxon>
        <taxon>Hadronyche</taxon>
    </lineage>
</organism>
<dbReference type="SMR" id="P0DP47"/>
<dbReference type="GO" id="GO:0005576">
    <property type="term" value="C:extracellular region"/>
    <property type="evidence" value="ECO:0007669"/>
    <property type="project" value="UniProtKB-SubCell"/>
</dbReference>
<dbReference type="GO" id="GO:0099106">
    <property type="term" value="F:ion channel regulator activity"/>
    <property type="evidence" value="ECO:0007669"/>
    <property type="project" value="UniProtKB-KW"/>
</dbReference>
<dbReference type="GO" id="GO:0090729">
    <property type="term" value="F:toxin activity"/>
    <property type="evidence" value="ECO:0007669"/>
    <property type="project" value="UniProtKB-KW"/>
</dbReference>
<dbReference type="Gene3D" id="6.20.10.10">
    <property type="match status" value="2"/>
</dbReference>
<dbReference type="SUPFAM" id="SSF57059">
    <property type="entry name" value="omega toxin-like"/>
    <property type="match status" value="2"/>
</dbReference>
<feature type="signal peptide" evidence="2">
    <location>
        <begin position="1"/>
        <end position="19"/>
    </location>
</feature>
<feature type="propeptide" id="PRO_0000459664" evidence="7">
    <location>
        <begin position="20"/>
        <end position="47"/>
    </location>
</feature>
<feature type="chain" id="PRO_0000440133" description="Pi-hexatoxin-Hi1c" evidence="7">
    <location>
        <begin position="48"/>
        <end position="128"/>
    </location>
</feature>
<feature type="repeat" description="Domain 1" evidence="1">
    <location>
        <begin position="54"/>
        <end position="84"/>
    </location>
</feature>
<feature type="repeat" description="Domain 2" evidence="1">
    <location>
        <begin position="93"/>
        <end position="124"/>
    </location>
</feature>
<feature type="region of interest" description="2 X approximate repeats with cysteine pattern C-C-CC-C-C" evidence="1">
    <location>
        <begin position="54"/>
        <end position="124"/>
    </location>
</feature>
<feature type="disulfide bond" evidence="1">
    <location>
        <begin position="54"/>
        <end position="69"/>
    </location>
</feature>
<feature type="disulfide bond" evidence="1">
    <location>
        <begin position="61"/>
        <end position="74"/>
    </location>
</feature>
<feature type="disulfide bond" evidence="1">
    <location>
        <begin position="68"/>
        <end position="84"/>
    </location>
</feature>
<feature type="disulfide bond" evidence="1">
    <location>
        <begin position="93"/>
        <end position="108"/>
    </location>
</feature>
<feature type="disulfide bond" evidence="1">
    <location>
        <begin position="100"/>
        <end position="113"/>
    </location>
</feature>
<feature type="disulfide bond" evidence="1">
    <location>
        <begin position="107"/>
        <end position="124"/>
    </location>
</feature>
<protein>
    <recommendedName>
        <fullName evidence="4">Pi-hexatoxin-Hi1c</fullName>
        <shortName evidence="4">Pi-HXTX-Hi1c</shortName>
    </recommendedName>
    <alternativeName>
        <fullName evidence="6">Double-knot toxin</fullName>
        <shortName evidence="6">DkTx</shortName>
    </alternativeName>
    <alternativeName>
        <fullName evidence="5">SF1 peptide</fullName>
    </alternativeName>
</protein>
<name>TP1C_HADIN</name>
<comment type="function">
    <text evidence="1">This toxin potently and selectively inhibits ASIC1a, an isoform of the gene ASIC1. It incompletely inhibits ASIC1a activation in a pH-independent and slowly reversible manner. This toxin acts by binding to and stabilizing the closed state of the channel, thereby impeding the transition into a conducting state. This toxin may bind to the acidic pocket of ASIC1a, since mutation of a key residue of this pocket (Arg-350) abolishes the ability of the toxin to inhibit ASIC1a. In vivo, this toxin protects the brain from neuronal injury when administered up to 8 hours after stroke onset.</text>
</comment>
<comment type="subcellular location">
    <subcellularLocation>
        <location evidence="3">Secreted</location>
    </subcellularLocation>
</comment>
<comment type="tissue specificity">
    <text evidence="7">Expressed by the venom gland.</text>
</comment>
<comment type="domain">
    <text evidence="6">The presence of a 'disulfide through disulfide knot' structurally defines this protein as a knottin. This toxin contains 2 'disulfide through disulfide knots' that are separated by a short linker.</text>
</comment>
<comment type="similarity">
    <text evidence="6">Belongs to the psalmotoxin-1 family. Double-knot toxin subfamily.</text>
</comment>
<keyword id="KW-1015">Disulfide bond</keyword>
<keyword id="KW-0872">Ion channel impairing toxin</keyword>
<keyword id="KW-1275">Proton-gated sodium channel impairing toxin</keyword>
<keyword id="KW-0677">Repeat</keyword>
<keyword id="KW-0964">Secreted</keyword>
<keyword id="KW-0732">Signal</keyword>
<keyword id="KW-0800">Toxin</keyword>
<accession>P0DP47</accession>
<reference key="1">
    <citation type="journal article" date="2020" name="Proc. Natl. Acad. Sci. U.S.A.">
        <title>Structural venomics reveals evolution of a complex venom by duplication and diversification of an ancient peptide-encoding gene.</title>
        <authorList>
            <person name="Pineda S.S."/>
            <person name="Chin Y.K."/>
            <person name="Undheim E.A.B."/>
            <person name="Senff S."/>
            <person name="Mobli M."/>
            <person name="Dauly C."/>
            <person name="Escoubas P."/>
            <person name="Nicholson G.M."/>
            <person name="Kaas Q."/>
            <person name="Guo S."/>
            <person name="Herzig V."/>
            <person name="Mattick J.S."/>
            <person name="King G.F."/>
        </authorList>
    </citation>
    <scope>NUCLEOTIDE SEQUENCE [MRNA]</scope>
    <scope>IDENTIFICATION BY MASS SPECTROMETRY</scope>
    <scope>SUBCELLULAR LOCATION</scope>
    <source>
        <tissue>Venom</tissue>
        <tissue>Venom gland</tissue>
    </source>
</reference>
<reference key="2">
    <citation type="journal article" date="2017" name="Proc. Natl. Acad. Sci. U.S.A.">
        <title>Potent neuroprotection after stroke afforded by a double-knot spider-venom peptide that inhibits acid-sensing ion channel 1a.</title>
        <authorList>
            <person name="Chassagnon I.R."/>
            <person name="McCarthy C.A."/>
            <person name="Chin Y.K."/>
            <person name="Pineda S.S."/>
            <person name="Keramidas A."/>
            <person name="Mobli M."/>
            <person name="Pham V."/>
            <person name="De Silva T.M."/>
            <person name="Lynch J.W."/>
            <person name="Widdop R.E."/>
            <person name="Rash L.D."/>
            <person name="King G.F."/>
        </authorList>
    </citation>
    <scope>NUCLEOTIDE SEQUENCE [MRNA] OF 52-128</scope>
    <source>
        <tissue>Venom gland</tissue>
    </source>
</reference>
<evidence type="ECO:0000250" key="1">
    <source>
        <dbReference type="UniProtKB" id="A0A1L1QJU3"/>
    </source>
</evidence>
<evidence type="ECO:0000255" key="2"/>
<evidence type="ECO:0000269" key="3">
    <source>
    </source>
</evidence>
<evidence type="ECO:0000303" key="4">
    <source>
    </source>
</evidence>
<evidence type="ECO:0000303" key="5">
    <source>
    </source>
</evidence>
<evidence type="ECO:0000305" key="6"/>
<evidence type="ECO:0000305" key="7">
    <source>
    </source>
</evidence>